<protein>
    <recommendedName>
        <fullName evidence="1">Catalase-peroxidase</fullName>
        <shortName evidence="1">CP</shortName>
        <ecNumber evidence="1">1.11.1.21</ecNumber>
    </recommendedName>
    <alternativeName>
        <fullName evidence="1">Peroxidase/catalase</fullName>
    </alternativeName>
</protein>
<accession>Q3YV31</accession>
<gene>
    <name evidence="1" type="primary">katG</name>
    <name type="ordered locus">SSON_4116</name>
</gene>
<sequence>MSTSDDIHNTTATGKCPFHQGGHDQSAGAGTTTRDWWPNQLRVDLLNQHSNRSNPLGEDFDYRKEFSKLDYYGLKKDLKALLTESQPWWPADWGSYAGLFIRMAWHGAGTYRSIDGRGGAGRGQQRFAPLNSWPDNVSLDKARRLLWPIKQKYGQKISWADLFILAGNVALENSGFRTFGFGAGREDVWEPDLDVNWGDEKAWLTHRHPEALAKAPLGATEMGLIYVNPEGPDHSGEPLSAAAAIRATFGNMGMNDEETVALIAGGHTLGKTHGAGPTSNVGPDPEAAPIEEQGLGWASTYGSGVGADAITSGLEVVWTQTPTQWSNYFFENLFKYEWVQTRSPAGAIQFEAVDAPEIIPDPFDPSKKRKPTMLVTDLTLRFDPEFEKISRRFLNDPQAFNEAFARAWFKLTHRDMGPKSRYIGPEVPKEDLIWQDPLPQPIYNPTEQDIIDLKFAIADSGLSVSERVSVAWASASTFRGGDKRGGANGARLALMPQRDWDVNAAAVRALPVLEKIQKESGKASLADIIVLAGVVGVEKAASAAGLSIHVPFAPGRVDARQDQTDIEMFELLEPIADGFRNYRARLDVSTTESLLIDKAQQLTLTAPEMTALVGGMRVLGANFDGSKNGVFTDRVGVLSNDFFVNLLDMRYEWKATDESKELFEGRDRETGEVKYTASRADLVFGSNSVLRAVAEVYASSDAHEKFVKDFVAAWVKVMNLDRFDLL</sequence>
<keyword id="KW-0349">Heme</keyword>
<keyword id="KW-0376">Hydrogen peroxide</keyword>
<keyword id="KW-0408">Iron</keyword>
<keyword id="KW-0479">Metal-binding</keyword>
<keyword id="KW-0560">Oxidoreductase</keyword>
<keyword id="KW-0575">Peroxidase</keyword>
<keyword id="KW-1185">Reference proteome</keyword>
<comment type="function">
    <text evidence="1">Bifunctional enzyme with both catalase and broad-spectrum peroxidase activity.</text>
</comment>
<comment type="catalytic activity">
    <reaction evidence="1">
        <text>H2O2 + AH2 = A + 2 H2O</text>
        <dbReference type="Rhea" id="RHEA:30275"/>
        <dbReference type="ChEBI" id="CHEBI:13193"/>
        <dbReference type="ChEBI" id="CHEBI:15377"/>
        <dbReference type="ChEBI" id="CHEBI:16240"/>
        <dbReference type="ChEBI" id="CHEBI:17499"/>
        <dbReference type="EC" id="1.11.1.21"/>
    </reaction>
</comment>
<comment type="catalytic activity">
    <reaction evidence="1">
        <text>2 H2O2 = O2 + 2 H2O</text>
        <dbReference type="Rhea" id="RHEA:20309"/>
        <dbReference type="ChEBI" id="CHEBI:15377"/>
        <dbReference type="ChEBI" id="CHEBI:15379"/>
        <dbReference type="ChEBI" id="CHEBI:16240"/>
        <dbReference type="EC" id="1.11.1.21"/>
    </reaction>
</comment>
<comment type="cofactor">
    <cofactor evidence="1">
        <name>heme b</name>
        <dbReference type="ChEBI" id="CHEBI:60344"/>
    </cofactor>
    <text evidence="1">Binds 1 heme b (iron(II)-protoporphyrin IX) group per dimer.</text>
</comment>
<comment type="subunit">
    <text evidence="1">Homodimer or homotetramer.</text>
</comment>
<comment type="PTM">
    <text evidence="1">Formation of the three residue Trp-Tyr-Met cross-link is important for the catalase, but not the peroxidase activity of the enzyme.</text>
</comment>
<comment type="similarity">
    <text evidence="1">Belongs to the peroxidase family. Peroxidase/catalase subfamily.</text>
</comment>
<evidence type="ECO:0000255" key="1">
    <source>
        <dbReference type="HAMAP-Rule" id="MF_01961"/>
    </source>
</evidence>
<evidence type="ECO:0000256" key="2">
    <source>
        <dbReference type="SAM" id="MobiDB-lite"/>
    </source>
</evidence>
<name>KATG_SHISS</name>
<dbReference type="EC" id="1.11.1.21" evidence="1"/>
<dbReference type="EMBL" id="CP000038">
    <property type="protein sequence ID" value="AAZ90631.1"/>
    <property type="molecule type" value="Genomic_DNA"/>
</dbReference>
<dbReference type="RefSeq" id="WP_005137665.1">
    <property type="nucleotide sequence ID" value="NC_007384.1"/>
</dbReference>
<dbReference type="SMR" id="Q3YV31"/>
<dbReference type="PeroxiBase" id="3669">
    <property type="entry name" value="SsoCP01_Ss046"/>
</dbReference>
<dbReference type="GeneID" id="93777950"/>
<dbReference type="KEGG" id="ssn:SSON_4116"/>
<dbReference type="HOGENOM" id="CLU_025424_2_0_6"/>
<dbReference type="Proteomes" id="UP000002529">
    <property type="component" value="Chromosome"/>
</dbReference>
<dbReference type="GO" id="GO:0005829">
    <property type="term" value="C:cytosol"/>
    <property type="evidence" value="ECO:0007669"/>
    <property type="project" value="TreeGrafter"/>
</dbReference>
<dbReference type="GO" id="GO:0004096">
    <property type="term" value="F:catalase activity"/>
    <property type="evidence" value="ECO:0007669"/>
    <property type="project" value="UniProtKB-UniRule"/>
</dbReference>
<dbReference type="GO" id="GO:0020037">
    <property type="term" value="F:heme binding"/>
    <property type="evidence" value="ECO:0007669"/>
    <property type="project" value="InterPro"/>
</dbReference>
<dbReference type="GO" id="GO:0046872">
    <property type="term" value="F:metal ion binding"/>
    <property type="evidence" value="ECO:0007669"/>
    <property type="project" value="UniProtKB-KW"/>
</dbReference>
<dbReference type="GO" id="GO:0070301">
    <property type="term" value="P:cellular response to hydrogen peroxide"/>
    <property type="evidence" value="ECO:0007669"/>
    <property type="project" value="TreeGrafter"/>
</dbReference>
<dbReference type="GO" id="GO:0042744">
    <property type="term" value="P:hydrogen peroxide catabolic process"/>
    <property type="evidence" value="ECO:0007669"/>
    <property type="project" value="UniProtKB-KW"/>
</dbReference>
<dbReference type="CDD" id="cd08200">
    <property type="entry name" value="catalase_peroxidase_2"/>
    <property type="match status" value="1"/>
</dbReference>
<dbReference type="FunFam" id="1.10.420.10:FF:000002">
    <property type="entry name" value="Catalase-peroxidase"/>
    <property type="match status" value="1"/>
</dbReference>
<dbReference type="FunFam" id="1.10.420.10:FF:000004">
    <property type="entry name" value="Catalase-peroxidase"/>
    <property type="match status" value="1"/>
</dbReference>
<dbReference type="FunFam" id="1.10.520.10:FF:000002">
    <property type="entry name" value="Catalase-peroxidase"/>
    <property type="match status" value="1"/>
</dbReference>
<dbReference type="Gene3D" id="1.10.520.10">
    <property type="match status" value="2"/>
</dbReference>
<dbReference type="Gene3D" id="1.10.420.10">
    <property type="entry name" value="Peroxidase, domain 2"/>
    <property type="match status" value="2"/>
</dbReference>
<dbReference type="HAMAP" id="MF_01961">
    <property type="entry name" value="Catal_peroxid"/>
    <property type="match status" value="1"/>
</dbReference>
<dbReference type="InterPro" id="IPR000763">
    <property type="entry name" value="Catalase_peroxidase"/>
</dbReference>
<dbReference type="InterPro" id="IPR002016">
    <property type="entry name" value="Haem_peroxidase"/>
</dbReference>
<dbReference type="InterPro" id="IPR010255">
    <property type="entry name" value="Haem_peroxidase_sf"/>
</dbReference>
<dbReference type="InterPro" id="IPR019794">
    <property type="entry name" value="Peroxidases_AS"/>
</dbReference>
<dbReference type="InterPro" id="IPR019793">
    <property type="entry name" value="Peroxidases_heam-ligand_BS"/>
</dbReference>
<dbReference type="NCBIfam" id="TIGR00198">
    <property type="entry name" value="cat_per_HPI"/>
    <property type="match status" value="1"/>
</dbReference>
<dbReference type="NCBIfam" id="NF011635">
    <property type="entry name" value="PRK15061.1"/>
    <property type="match status" value="1"/>
</dbReference>
<dbReference type="PANTHER" id="PTHR30555:SF0">
    <property type="entry name" value="CATALASE-PEROXIDASE"/>
    <property type="match status" value="1"/>
</dbReference>
<dbReference type="PANTHER" id="PTHR30555">
    <property type="entry name" value="HYDROPEROXIDASE I, BIFUNCTIONAL CATALASE-PEROXIDASE"/>
    <property type="match status" value="1"/>
</dbReference>
<dbReference type="Pfam" id="PF00141">
    <property type="entry name" value="peroxidase"/>
    <property type="match status" value="2"/>
</dbReference>
<dbReference type="PRINTS" id="PR00460">
    <property type="entry name" value="BPEROXIDASE"/>
</dbReference>
<dbReference type="PRINTS" id="PR00458">
    <property type="entry name" value="PEROXIDASE"/>
</dbReference>
<dbReference type="SUPFAM" id="SSF48113">
    <property type="entry name" value="Heme-dependent peroxidases"/>
    <property type="match status" value="2"/>
</dbReference>
<dbReference type="PROSITE" id="PS00435">
    <property type="entry name" value="PEROXIDASE_1"/>
    <property type="match status" value="1"/>
</dbReference>
<dbReference type="PROSITE" id="PS00436">
    <property type="entry name" value="PEROXIDASE_2"/>
    <property type="match status" value="1"/>
</dbReference>
<dbReference type="PROSITE" id="PS50873">
    <property type="entry name" value="PEROXIDASE_4"/>
    <property type="match status" value="1"/>
</dbReference>
<feature type="chain" id="PRO_0000354932" description="Catalase-peroxidase">
    <location>
        <begin position="1"/>
        <end position="726"/>
    </location>
</feature>
<feature type="region of interest" description="Disordered" evidence="2">
    <location>
        <begin position="1"/>
        <end position="33"/>
    </location>
</feature>
<feature type="active site" description="Proton acceptor" evidence="1">
    <location>
        <position position="106"/>
    </location>
</feature>
<feature type="binding site" description="axial binding residue" evidence="1">
    <location>
        <position position="267"/>
    </location>
    <ligand>
        <name>heme b</name>
        <dbReference type="ChEBI" id="CHEBI:60344"/>
    </ligand>
    <ligandPart>
        <name>Fe</name>
        <dbReference type="ChEBI" id="CHEBI:18248"/>
    </ligandPart>
</feature>
<feature type="site" description="Transition state stabilizer" evidence="1">
    <location>
        <position position="102"/>
    </location>
</feature>
<feature type="cross-link" description="Tryptophyl-tyrosyl-methioninium (Trp-Tyr) (with M-252)" evidence="1">
    <location>
        <begin position="105"/>
        <end position="226"/>
    </location>
</feature>
<feature type="cross-link" description="Tryptophyl-tyrosyl-methioninium (Tyr-Met) (with W-105)" evidence="1">
    <location>
        <begin position="226"/>
        <end position="252"/>
    </location>
</feature>
<reference key="1">
    <citation type="journal article" date="2005" name="Nucleic Acids Res.">
        <title>Genome dynamics and diversity of Shigella species, the etiologic agents of bacillary dysentery.</title>
        <authorList>
            <person name="Yang F."/>
            <person name="Yang J."/>
            <person name="Zhang X."/>
            <person name="Chen L."/>
            <person name="Jiang Y."/>
            <person name="Yan Y."/>
            <person name="Tang X."/>
            <person name="Wang J."/>
            <person name="Xiong Z."/>
            <person name="Dong J."/>
            <person name="Xue Y."/>
            <person name="Zhu Y."/>
            <person name="Xu X."/>
            <person name="Sun L."/>
            <person name="Chen S."/>
            <person name="Nie H."/>
            <person name="Peng J."/>
            <person name="Xu J."/>
            <person name="Wang Y."/>
            <person name="Yuan Z."/>
            <person name="Wen Y."/>
            <person name="Yao Z."/>
            <person name="Shen Y."/>
            <person name="Qiang B."/>
            <person name="Hou Y."/>
            <person name="Yu J."/>
            <person name="Jin Q."/>
        </authorList>
    </citation>
    <scope>NUCLEOTIDE SEQUENCE [LARGE SCALE GENOMIC DNA]</scope>
    <source>
        <strain>Ss046</strain>
    </source>
</reference>
<organism>
    <name type="scientific">Shigella sonnei (strain Ss046)</name>
    <dbReference type="NCBI Taxonomy" id="300269"/>
    <lineage>
        <taxon>Bacteria</taxon>
        <taxon>Pseudomonadati</taxon>
        <taxon>Pseudomonadota</taxon>
        <taxon>Gammaproteobacteria</taxon>
        <taxon>Enterobacterales</taxon>
        <taxon>Enterobacteriaceae</taxon>
        <taxon>Shigella</taxon>
    </lineage>
</organism>
<proteinExistence type="inferred from homology"/>